<evidence type="ECO:0000305" key="1"/>
<evidence type="ECO:0007829" key="2">
    <source>
        <dbReference type="PDB" id="1O9D"/>
    </source>
</evidence>
<evidence type="ECO:0007829" key="3">
    <source>
        <dbReference type="PDB" id="3E6Y"/>
    </source>
</evidence>
<evidence type="ECO:0007829" key="4">
    <source>
        <dbReference type="PDB" id="5NWJ"/>
    </source>
</evidence>
<name>1433C_TOBAC</name>
<keyword id="KW-0002">3D-structure</keyword>
<keyword id="KW-1185">Reference proteome</keyword>
<organism>
    <name type="scientific">Nicotiana tabacum</name>
    <name type="common">Common tobacco</name>
    <dbReference type="NCBI Taxonomy" id="4097"/>
    <lineage>
        <taxon>Eukaryota</taxon>
        <taxon>Viridiplantae</taxon>
        <taxon>Streptophyta</taxon>
        <taxon>Embryophyta</taxon>
        <taxon>Tracheophyta</taxon>
        <taxon>Spermatophyta</taxon>
        <taxon>Magnoliopsida</taxon>
        <taxon>eudicotyledons</taxon>
        <taxon>Gunneridae</taxon>
        <taxon>Pentapetalae</taxon>
        <taxon>asterids</taxon>
        <taxon>lamiids</taxon>
        <taxon>Solanales</taxon>
        <taxon>Solanaceae</taxon>
        <taxon>Nicotianoideae</taxon>
        <taxon>Nicotianeae</taxon>
        <taxon>Nicotiana</taxon>
    </lineage>
</organism>
<feature type="chain" id="PRO_0000058709" description="14-3-3-like protein C">
    <location>
        <begin position="1"/>
        <end position="260"/>
    </location>
</feature>
<feature type="helix" evidence="4">
    <location>
        <begin position="7"/>
        <end position="21"/>
    </location>
</feature>
<feature type="helix" evidence="4">
    <location>
        <begin position="24"/>
        <end position="36"/>
    </location>
</feature>
<feature type="strand" evidence="2">
    <location>
        <begin position="39"/>
        <end position="41"/>
    </location>
</feature>
<feature type="helix" evidence="4">
    <location>
        <begin position="45"/>
        <end position="77"/>
    </location>
</feature>
<feature type="turn" evidence="4">
    <location>
        <begin position="78"/>
        <end position="80"/>
    </location>
</feature>
<feature type="helix" evidence="4">
    <location>
        <begin position="82"/>
        <end position="112"/>
    </location>
</feature>
<feature type="helix" evidence="4">
    <location>
        <begin position="114"/>
        <end position="117"/>
    </location>
</feature>
<feature type="helix" evidence="4">
    <location>
        <begin position="121"/>
        <end position="139"/>
    </location>
</feature>
<feature type="helix" evidence="4">
    <location>
        <begin position="144"/>
        <end position="168"/>
    </location>
</feature>
<feature type="helix" evidence="4">
    <location>
        <begin position="174"/>
        <end position="189"/>
    </location>
</feature>
<feature type="helix" evidence="4">
    <location>
        <begin position="194"/>
        <end position="215"/>
    </location>
</feature>
<feature type="turn" evidence="3">
    <location>
        <begin position="217"/>
        <end position="219"/>
    </location>
</feature>
<feature type="helix" evidence="4">
    <location>
        <begin position="220"/>
        <end position="242"/>
    </location>
</feature>
<proteinExistence type="evidence at protein level"/>
<protein>
    <recommendedName>
        <fullName>14-3-3-like protein C</fullName>
    </recommendedName>
    <alternativeName>
        <fullName>14-3-3-like protein B</fullName>
    </alternativeName>
</protein>
<comment type="similarity">
    <text evidence="1">Belongs to the 14-3-3 family.</text>
</comment>
<sequence>MAVAPTAREENVYMAKLAEQAERYEEMVEFMEKVSNSLGSEELTVEERNLLSVAYKNVIGARRASWRIISSIEQKEESRGNEEHVNSIREYRSKIENELSKICDGILKLLDAKLIPSAASGDSKVFYLKMKGDYHRYLAEFKTGAERKEAAESTLTAYKAAQDIATTELAPTHPIRLGLALNFSVFYYEILNSPDRACNLAKQAFDEAIAELDTLGEESYKDSTLIMQLLRDNLTLWTSDMQDDGADEIKEDPKPDEAKN</sequence>
<accession>P93343</accession>
<reference key="1">
    <citation type="submission" date="1997-02" db="EMBL/GenBank/DDBJ databases">
        <authorList>
            <person name="Shen W.H."/>
            <person name="Gigot C."/>
        </authorList>
    </citation>
    <scope>NUCLEOTIDE SEQUENCE [MRNA]</scope>
    <source>
        <strain>cv. Bright Yellow 2</strain>
    </source>
</reference>
<reference key="2">
    <citation type="journal article" date="1998" name="Planta">
        <title>Five new 14-3-3 isoforms from Nicotiana tabacum L.: implications for the phylogeny of plant 14-3-3 proteins.</title>
        <authorList>
            <person name="Piotrowski M."/>
            <person name="Oecking C."/>
        </authorList>
    </citation>
    <scope>NUCLEOTIDE SEQUENCE [MRNA]</scope>
</reference>
<reference key="3">
    <citation type="journal article" date="2003" name="EMBO J.">
        <title>Structural view of a fungal toxin acting on a 14-3-3 regulatory complex.</title>
        <authorList>
            <person name="Wuertele M."/>
            <person name="Jelich-Ottmann C."/>
            <person name="Wittinghofer A."/>
            <person name="Oecking C."/>
        </authorList>
    </citation>
    <scope>X-RAY CRYSTALLOGRAPHY (2.3 ANGSTROMS)</scope>
</reference>
<dbReference type="EMBL" id="Y11211">
    <property type="protein sequence ID" value="CAA72094.1"/>
    <property type="molecule type" value="mRNA"/>
</dbReference>
<dbReference type="EMBL" id="U91724">
    <property type="protein sequence ID" value="AAC49892.1"/>
    <property type="molecule type" value="mRNA"/>
</dbReference>
<dbReference type="PIR" id="T02051">
    <property type="entry name" value="T02051"/>
</dbReference>
<dbReference type="RefSeq" id="NP_001312172.1">
    <property type="nucleotide sequence ID" value="NM_001325243.1"/>
</dbReference>
<dbReference type="PDB" id="1O9C">
    <property type="method" value="X-ray"/>
    <property type="resolution" value="2.60 A"/>
    <property type="chains" value="A=1-260"/>
</dbReference>
<dbReference type="PDB" id="1O9D">
    <property type="method" value="X-ray"/>
    <property type="resolution" value="2.30 A"/>
    <property type="chains" value="A=1-260"/>
</dbReference>
<dbReference type="PDB" id="1O9E">
    <property type="method" value="X-ray"/>
    <property type="resolution" value="2.60 A"/>
    <property type="chains" value="A=1-260"/>
</dbReference>
<dbReference type="PDB" id="1O9F">
    <property type="method" value="X-ray"/>
    <property type="resolution" value="2.70 A"/>
    <property type="chains" value="A=1-260"/>
</dbReference>
<dbReference type="PDB" id="2O98">
    <property type="method" value="X-ray"/>
    <property type="resolution" value="2.70 A"/>
    <property type="chains" value="A/B=1-242"/>
</dbReference>
<dbReference type="PDB" id="3E6Y">
    <property type="method" value="X-ray"/>
    <property type="resolution" value="2.50 A"/>
    <property type="chains" value="A/B=1-260"/>
</dbReference>
<dbReference type="PDB" id="3M50">
    <property type="method" value="X-ray"/>
    <property type="resolution" value="2.60 A"/>
    <property type="chains" value="A=1-240"/>
</dbReference>
<dbReference type="PDB" id="3M51">
    <property type="method" value="X-ray"/>
    <property type="resolution" value="3.25 A"/>
    <property type="chains" value="A=1-240"/>
</dbReference>
<dbReference type="PDB" id="5NWI">
    <property type="method" value="X-ray"/>
    <property type="resolution" value="2.35 A"/>
    <property type="chains" value="A=1-260"/>
</dbReference>
<dbReference type="PDB" id="5NWJ">
    <property type="method" value="X-ray"/>
    <property type="resolution" value="2.07 A"/>
    <property type="chains" value="A=1-260"/>
</dbReference>
<dbReference type="PDB" id="5NWK">
    <property type="method" value="X-ray"/>
    <property type="resolution" value="3.30 A"/>
    <property type="chains" value="A/B/C/D/E/F/G/H=1-260"/>
</dbReference>
<dbReference type="PDBsum" id="1O9C"/>
<dbReference type="PDBsum" id="1O9D"/>
<dbReference type="PDBsum" id="1O9E"/>
<dbReference type="PDBsum" id="1O9F"/>
<dbReference type="PDBsum" id="2O98"/>
<dbReference type="PDBsum" id="3E6Y"/>
<dbReference type="PDBsum" id="3M50"/>
<dbReference type="PDBsum" id="3M51"/>
<dbReference type="PDBsum" id="5NWI"/>
<dbReference type="PDBsum" id="5NWJ"/>
<dbReference type="PDBsum" id="5NWK"/>
<dbReference type="SMR" id="P93343"/>
<dbReference type="STRING" id="4097.P93343"/>
<dbReference type="PaxDb" id="4097-P93343"/>
<dbReference type="GeneID" id="107777576"/>
<dbReference type="KEGG" id="nta:107777576"/>
<dbReference type="OMA" id="CFTSREQ"/>
<dbReference type="OrthoDB" id="10260625at2759"/>
<dbReference type="PhylomeDB" id="P93343"/>
<dbReference type="EvolutionaryTrace" id="P93343"/>
<dbReference type="Proteomes" id="UP000084051">
    <property type="component" value="Unplaced"/>
</dbReference>
<dbReference type="GO" id="GO:0005737">
    <property type="term" value="C:cytoplasm"/>
    <property type="evidence" value="ECO:0000318"/>
    <property type="project" value="GO_Central"/>
</dbReference>
<dbReference type="GO" id="GO:0008104">
    <property type="term" value="P:protein localization"/>
    <property type="evidence" value="ECO:0000318"/>
    <property type="project" value="GO_Central"/>
</dbReference>
<dbReference type="GO" id="GO:0007165">
    <property type="term" value="P:signal transduction"/>
    <property type="evidence" value="ECO:0000318"/>
    <property type="project" value="GO_Central"/>
</dbReference>
<dbReference type="CDD" id="cd10026">
    <property type="entry name" value="14-3-3_plant"/>
    <property type="match status" value="1"/>
</dbReference>
<dbReference type="FunFam" id="1.20.190.20:FF:000002">
    <property type="entry name" value="14-3-3 protein epsilon"/>
    <property type="match status" value="1"/>
</dbReference>
<dbReference type="Gene3D" id="1.20.190.20">
    <property type="entry name" value="14-3-3 domain"/>
    <property type="match status" value="1"/>
</dbReference>
<dbReference type="InterPro" id="IPR000308">
    <property type="entry name" value="14-3-3"/>
</dbReference>
<dbReference type="InterPro" id="IPR023409">
    <property type="entry name" value="14-3-3_CS"/>
</dbReference>
<dbReference type="InterPro" id="IPR036815">
    <property type="entry name" value="14-3-3_dom_sf"/>
</dbReference>
<dbReference type="InterPro" id="IPR023410">
    <property type="entry name" value="14-3-3_domain"/>
</dbReference>
<dbReference type="PANTHER" id="PTHR18860">
    <property type="entry name" value="14-3-3 PROTEIN"/>
    <property type="match status" value="1"/>
</dbReference>
<dbReference type="Pfam" id="PF00244">
    <property type="entry name" value="14-3-3"/>
    <property type="match status" value="1"/>
</dbReference>
<dbReference type="PIRSF" id="PIRSF000868">
    <property type="entry name" value="14-3-3"/>
    <property type="match status" value="1"/>
</dbReference>
<dbReference type="PRINTS" id="PR00305">
    <property type="entry name" value="1433ZETA"/>
</dbReference>
<dbReference type="SMART" id="SM00101">
    <property type="entry name" value="14_3_3"/>
    <property type="match status" value="1"/>
</dbReference>
<dbReference type="SUPFAM" id="SSF48445">
    <property type="entry name" value="14-3-3 protein"/>
    <property type="match status" value="1"/>
</dbReference>
<dbReference type="PROSITE" id="PS00796">
    <property type="entry name" value="1433_1"/>
    <property type="match status" value="1"/>
</dbReference>
<dbReference type="PROSITE" id="PS00797">
    <property type="entry name" value="1433_2"/>
    <property type="match status" value="1"/>
</dbReference>